<reference key="1">
    <citation type="journal article" date="2011" name="PLoS Genet.">
        <title>Genomic analysis of the necrotrophic fungal pathogens Sclerotinia sclerotiorum and Botrytis cinerea.</title>
        <authorList>
            <person name="Amselem J."/>
            <person name="Cuomo C.A."/>
            <person name="van Kan J.A.L."/>
            <person name="Viaud M."/>
            <person name="Benito E.P."/>
            <person name="Couloux A."/>
            <person name="Coutinho P.M."/>
            <person name="de Vries R.P."/>
            <person name="Dyer P.S."/>
            <person name="Fillinger S."/>
            <person name="Fournier E."/>
            <person name="Gout L."/>
            <person name="Hahn M."/>
            <person name="Kohn L."/>
            <person name="Lapalu N."/>
            <person name="Plummer K.M."/>
            <person name="Pradier J.-M."/>
            <person name="Quevillon E."/>
            <person name="Sharon A."/>
            <person name="Simon A."/>
            <person name="ten Have A."/>
            <person name="Tudzynski B."/>
            <person name="Tudzynski P."/>
            <person name="Wincker P."/>
            <person name="Andrew M."/>
            <person name="Anthouard V."/>
            <person name="Beever R.E."/>
            <person name="Beffa R."/>
            <person name="Benoit I."/>
            <person name="Bouzid O."/>
            <person name="Brault B."/>
            <person name="Chen Z."/>
            <person name="Choquer M."/>
            <person name="Collemare J."/>
            <person name="Cotton P."/>
            <person name="Danchin E.G."/>
            <person name="Da Silva C."/>
            <person name="Gautier A."/>
            <person name="Giraud C."/>
            <person name="Giraud T."/>
            <person name="Gonzalez C."/>
            <person name="Grossetete S."/>
            <person name="Gueldener U."/>
            <person name="Henrissat B."/>
            <person name="Howlett B.J."/>
            <person name="Kodira C."/>
            <person name="Kretschmer M."/>
            <person name="Lappartient A."/>
            <person name="Leroch M."/>
            <person name="Levis C."/>
            <person name="Mauceli E."/>
            <person name="Neuveglise C."/>
            <person name="Oeser B."/>
            <person name="Pearson M."/>
            <person name="Poulain J."/>
            <person name="Poussereau N."/>
            <person name="Quesneville H."/>
            <person name="Rascle C."/>
            <person name="Schumacher J."/>
            <person name="Segurens B."/>
            <person name="Sexton A."/>
            <person name="Silva E."/>
            <person name="Sirven C."/>
            <person name="Soanes D.M."/>
            <person name="Talbot N.J."/>
            <person name="Templeton M."/>
            <person name="Yandava C."/>
            <person name="Yarden O."/>
            <person name="Zeng Q."/>
            <person name="Rollins J.A."/>
            <person name="Lebrun M.-H."/>
            <person name="Dickman M."/>
        </authorList>
    </citation>
    <scope>NUCLEOTIDE SEQUENCE [LARGE SCALE GENOMIC DNA]</scope>
    <source>
        <strain>B05.10</strain>
    </source>
</reference>
<reference key="2">
    <citation type="journal article" date="2012" name="Eukaryot. Cell">
        <title>Genome update of Botrytis cinerea strains B05.10 and T4.</title>
        <authorList>
            <person name="Staats M."/>
            <person name="van Kan J.A.L."/>
        </authorList>
    </citation>
    <scope>NUCLEOTIDE SEQUENCE [LARGE SCALE GENOMIC DNA]</scope>
    <source>
        <strain>B05.10</strain>
    </source>
</reference>
<reference key="3">
    <citation type="journal article" date="2017" name="Mol. Plant Pathol.">
        <title>A gapless genome sequence of the fungus Botrytis cinerea.</title>
        <authorList>
            <person name="van Kan J.A.L."/>
            <person name="Stassen J.H.M."/>
            <person name="Mosbach A."/>
            <person name="van der Lee T.A.J."/>
            <person name="Faino L."/>
            <person name="Farmer A.D."/>
            <person name="Papasotiriou D.G."/>
            <person name="Zhou S."/>
            <person name="Seidl M.F."/>
            <person name="Cottam E."/>
            <person name="Edel D."/>
            <person name="Hahn M."/>
            <person name="Schwartz D.C."/>
            <person name="Dietrich R.A."/>
            <person name="Widdison S."/>
            <person name="Scalliet G."/>
        </authorList>
    </citation>
    <scope>NUCLEOTIDE SEQUENCE [LARGE SCALE GENOMIC DNA]</scope>
    <source>
        <strain>B05.10</strain>
    </source>
</reference>
<reference key="4">
    <citation type="journal article" date="2016" name="New Phytol.">
        <title>Aquaporin8 regulates cellular development and reactive oxygen species production, a critical component of virulence in Botrytis cinerea.</title>
        <authorList>
            <person name="An B."/>
            <person name="Li B."/>
            <person name="Li H."/>
            <person name="Zhang Z."/>
            <person name="Qin G."/>
            <person name="Tian S."/>
        </authorList>
    </citation>
    <scope>FUNCTION</scope>
    <scope>DOMAIN</scope>
    <scope>INDUCTION</scope>
    <scope>DISRUPTION PHENOTYPE</scope>
</reference>
<gene>
    <name evidence="5" type="primary">AQP7</name>
    <name type="ORF">BCIN_01g00710</name>
</gene>
<evidence type="ECO:0000255" key="1"/>
<evidence type="ECO:0000255" key="2">
    <source>
        <dbReference type="PROSITE-ProRule" id="PRU00498"/>
    </source>
</evidence>
<evidence type="ECO:0000256" key="3">
    <source>
        <dbReference type="SAM" id="MobiDB-lite"/>
    </source>
</evidence>
<evidence type="ECO:0000269" key="4">
    <source>
    </source>
</evidence>
<evidence type="ECO:0000303" key="5">
    <source>
    </source>
</evidence>
<evidence type="ECO:0000305" key="6"/>
<evidence type="ECO:0000305" key="7">
    <source>
    </source>
</evidence>
<accession>A0A384J409</accession>
<sequence length="454" mass="48351">MNINEPRDGGGFVLPFFNDSKKSRKSHAGRDSLKSNRVPFTKWVPDTVSYTTKPLKNAHRWLHLHNKTRNHFVATVAEFAGTTLFLFFAFSGTQVALLATPANDSNVVGTPSNPAQLLYVSLCFGFSLAVNAWVFFRISGGLFNPAVTMGMCIVGALPYFRGLLLIFAQIIGGIAAAAIVSALFPGPITFRTSLGGGTSIVQGLFIEMFLTAELVFTIFMLAAEKHKGTFIAPIGIGLSLFIAELTGVYFTGGSVNPARSFGPSVVSGQFTGYHWIYWVGPILGAILASAFYKFIKMLEYETANPGQDAGRVGEVIDPEAQAIKNRVSFASEGLVGRELDESGASHVHENGNHFGAPKEYGTKRRPFSDSPAPPNANDQFAGLSEGGLHTDEFANENIGGGHSGEGAMHRNKRDSEGTLVGNGKKGVLKVGAGGTGGAAVGSTNENLRDNTHNN</sequence>
<comment type="function">
    <text evidence="4 7">Water channel required to facilitate the transport of water across membranes (Probable). Involved in conidiation (PubMed:26527167).</text>
</comment>
<comment type="catalytic activity">
    <reaction evidence="7">
        <text>H2O(in) = H2O(out)</text>
        <dbReference type="Rhea" id="RHEA:29667"/>
        <dbReference type="ChEBI" id="CHEBI:15377"/>
    </reaction>
</comment>
<comment type="subcellular location">
    <subcellularLocation>
        <location evidence="1">Membrane</location>
        <topology evidence="1">Multi-pass membrane protein</topology>
    </subcellularLocation>
</comment>
<comment type="induction">
    <text evidence="4">Expression is higher in conidia than in vegetative hyphae.</text>
</comment>
<comment type="domain">
    <text evidence="7">Aquaporins contain two tandem repeats each containing three membrane-spanning domains and a pore-forming loop with the signature motif Asn-Pro-Ala (NPA).</text>
</comment>
<comment type="disruption phenotype">
    <text evidence="4">Leads to a slight reduction in the vegetative growth rate and delayed conidiation.</text>
</comment>
<comment type="similarity">
    <text evidence="6">Belongs to the MIP/aquaporin (TC 1.A.8) family.</text>
</comment>
<keyword id="KW-0325">Glycoprotein</keyword>
<keyword id="KW-0472">Membrane</keyword>
<keyword id="KW-1185">Reference proteome</keyword>
<keyword id="KW-0677">Repeat</keyword>
<keyword id="KW-0812">Transmembrane</keyword>
<keyword id="KW-1133">Transmembrane helix</keyword>
<keyword id="KW-0813">Transport</keyword>
<proteinExistence type="evidence at transcript level"/>
<organism>
    <name type="scientific">Botryotinia fuckeliana (strain B05.10)</name>
    <name type="common">Noble rot fungus</name>
    <name type="synonym">Botrytis cinerea</name>
    <dbReference type="NCBI Taxonomy" id="332648"/>
    <lineage>
        <taxon>Eukaryota</taxon>
        <taxon>Fungi</taxon>
        <taxon>Dikarya</taxon>
        <taxon>Ascomycota</taxon>
        <taxon>Pezizomycotina</taxon>
        <taxon>Leotiomycetes</taxon>
        <taxon>Helotiales</taxon>
        <taxon>Sclerotiniaceae</taxon>
        <taxon>Botrytis</taxon>
    </lineage>
</organism>
<dbReference type="EMBL" id="CP009805">
    <property type="protein sequence ID" value="ATZ45256.1"/>
    <property type="molecule type" value="Genomic_DNA"/>
</dbReference>
<dbReference type="SMR" id="A0A384J409"/>
<dbReference type="EnsemblFungi" id="Bcin01g00710.1">
    <property type="protein sequence ID" value="Bcin01p00710.1"/>
    <property type="gene ID" value="Bcin01g00710"/>
</dbReference>
<dbReference type="VEuPathDB" id="FungiDB:Bcin01g00710"/>
<dbReference type="OrthoDB" id="3222at2759"/>
<dbReference type="Proteomes" id="UP000001798">
    <property type="component" value="Chromosome bcin01"/>
</dbReference>
<dbReference type="GO" id="GO:0005886">
    <property type="term" value="C:plasma membrane"/>
    <property type="evidence" value="ECO:0007669"/>
    <property type="project" value="TreeGrafter"/>
</dbReference>
<dbReference type="GO" id="GO:0015250">
    <property type="term" value="F:water channel activity"/>
    <property type="evidence" value="ECO:0007669"/>
    <property type="project" value="TreeGrafter"/>
</dbReference>
<dbReference type="FunFam" id="1.20.1080.10:FF:000024">
    <property type="entry name" value="MIP aquaporin (Eurofung)"/>
    <property type="match status" value="1"/>
</dbReference>
<dbReference type="Gene3D" id="1.20.1080.10">
    <property type="entry name" value="Glycerol uptake facilitator protein"/>
    <property type="match status" value="1"/>
</dbReference>
<dbReference type="InterPro" id="IPR023271">
    <property type="entry name" value="Aquaporin-like"/>
</dbReference>
<dbReference type="InterPro" id="IPR034294">
    <property type="entry name" value="Aquaporin_transptr"/>
</dbReference>
<dbReference type="InterPro" id="IPR000425">
    <property type="entry name" value="MIP"/>
</dbReference>
<dbReference type="PANTHER" id="PTHR19139">
    <property type="entry name" value="AQUAPORIN TRANSPORTER"/>
    <property type="match status" value="1"/>
</dbReference>
<dbReference type="PANTHER" id="PTHR19139:SF199">
    <property type="entry name" value="MIP17260P"/>
    <property type="match status" value="1"/>
</dbReference>
<dbReference type="Pfam" id="PF00230">
    <property type="entry name" value="MIP"/>
    <property type="match status" value="1"/>
</dbReference>
<dbReference type="PRINTS" id="PR00783">
    <property type="entry name" value="MINTRINSICP"/>
</dbReference>
<dbReference type="SUPFAM" id="SSF81338">
    <property type="entry name" value="Aquaporin-like"/>
    <property type="match status" value="1"/>
</dbReference>
<feature type="chain" id="PRO_0000457445" description="Aquaporin-7">
    <location>
        <begin position="1"/>
        <end position="454"/>
    </location>
</feature>
<feature type="topological domain" description="Cytoplasmic" evidence="6">
    <location>
        <begin position="1"/>
        <end position="71"/>
    </location>
</feature>
<feature type="transmembrane region" description="Helical" evidence="1">
    <location>
        <begin position="72"/>
        <end position="92"/>
    </location>
</feature>
<feature type="topological domain" description="Extracellular" evidence="6">
    <location>
        <begin position="93"/>
        <end position="115"/>
    </location>
</feature>
<feature type="transmembrane region" description="Helical" evidence="1">
    <location>
        <begin position="116"/>
        <end position="136"/>
    </location>
</feature>
<feature type="topological domain" description="Cytoplasmic" evidence="6">
    <location>
        <begin position="137"/>
        <end position="163"/>
    </location>
</feature>
<feature type="transmembrane region" description="Helical" evidence="1">
    <location>
        <begin position="164"/>
        <end position="184"/>
    </location>
</feature>
<feature type="topological domain" description="Extracellular" evidence="6">
    <location>
        <begin position="185"/>
        <end position="202"/>
    </location>
</feature>
<feature type="transmembrane region" description="Helical" evidence="1">
    <location>
        <begin position="203"/>
        <end position="223"/>
    </location>
</feature>
<feature type="topological domain" description="Cytoplasmic" evidence="6">
    <location>
        <begin position="224"/>
        <end position="229"/>
    </location>
</feature>
<feature type="transmembrane region" description="Helical" evidence="1">
    <location>
        <begin position="230"/>
        <end position="250"/>
    </location>
</feature>
<feature type="topological domain" description="Extracellular" evidence="6">
    <location>
        <begin position="251"/>
        <end position="274"/>
    </location>
</feature>
<feature type="transmembrane region" description="Helical" evidence="1">
    <location>
        <begin position="275"/>
        <end position="295"/>
    </location>
</feature>
<feature type="topological domain" description="Cytoplasmic" evidence="6">
    <location>
        <begin position="296"/>
        <end position="454"/>
    </location>
</feature>
<feature type="region of interest" description="Disordered" evidence="3">
    <location>
        <begin position="343"/>
        <end position="454"/>
    </location>
</feature>
<feature type="short sequence motif" description="NPA 1" evidence="7">
    <location>
        <begin position="144"/>
        <end position="146"/>
    </location>
</feature>
<feature type="short sequence motif" description="NPA 2" evidence="7">
    <location>
        <begin position="256"/>
        <end position="258"/>
    </location>
</feature>
<feature type="glycosylation site" description="N-linked (GlcNAc...) asparagine" evidence="2">
    <location>
        <position position="103"/>
    </location>
</feature>
<protein>
    <recommendedName>
        <fullName evidence="5">Aquaporin-7</fullName>
    </recommendedName>
</protein>
<name>AQP7_BOTFB</name>